<reference key="1">
    <citation type="journal article" date="2005" name="Proc. Natl. Acad. Sci. U.S.A.">
        <title>Complete genome sequence of the probiotic lactic acid bacterium Lactobacillus acidophilus NCFM.</title>
        <authorList>
            <person name="Altermann E."/>
            <person name="Russell W.M."/>
            <person name="Azcarate-Peril M.A."/>
            <person name="Barrangou R."/>
            <person name="Buck B.L."/>
            <person name="McAuliffe O."/>
            <person name="Souther N."/>
            <person name="Dobson A."/>
            <person name="Duong T."/>
            <person name="Callanan M."/>
            <person name="Lick S."/>
            <person name="Hamrick A."/>
            <person name="Cano R."/>
            <person name="Klaenhammer T.R."/>
        </authorList>
    </citation>
    <scope>NUCLEOTIDE SEQUENCE [LARGE SCALE GENOMIC DNA]</scope>
    <source>
        <strain>ATCC 700396 / NCK56 / N2 / NCFM</strain>
    </source>
</reference>
<sequence length="239" mass="26756">MKVIVTENKIQGSAKAFEIFEKGIKNGAKVLGLATGSTPEILYQNWVKSDLNCDDLTSINLDEYVGLTPDNPQSYHYFMQKHLFDKKTFKKTYIPDGMTKDVPAYCKEYDQIIKDNPIDIQLLGIGQNGHIAFNEPGTPFDIGTHEVKLTENTIKANARFFDNEDEVPKSAICMGTANIMDSKKIVLMAFGEKKAKAIKEMIEGPITEEVPASILQKHPDVTVIVDTYAAQELDDKYKN</sequence>
<protein>
    <recommendedName>
        <fullName evidence="1">Glucosamine-6-phosphate deaminase</fullName>
        <ecNumber evidence="1">3.5.99.6</ecNumber>
    </recommendedName>
    <alternativeName>
        <fullName evidence="1">GlcN6P deaminase</fullName>
        <shortName evidence="1">GNPDA</shortName>
    </alternativeName>
    <alternativeName>
        <fullName evidence="1">Glucosamine-6-phosphate isomerase</fullName>
    </alternativeName>
</protein>
<accession>Q5FHT1</accession>
<proteinExistence type="inferred from homology"/>
<organism>
    <name type="scientific">Lactobacillus acidophilus (strain ATCC 700396 / NCK56 / N2 / NCFM)</name>
    <dbReference type="NCBI Taxonomy" id="272621"/>
    <lineage>
        <taxon>Bacteria</taxon>
        <taxon>Bacillati</taxon>
        <taxon>Bacillota</taxon>
        <taxon>Bacilli</taxon>
        <taxon>Lactobacillales</taxon>
        <taxon>Lactobacillaceae</taxon>
        <taxon>Lactobacillus</taxon>
    </lineage>
</organism>
<keyword id="KW-0119">Carbohydrate metabolism</keyword>
<keyword id="KW-0378">Hydrolase</keyword>
<keyword id="KW-1185">Reference proteome</keyword>
<comment type="function">
    <text evidence="1">Catalyzes the reversible isomerization-deamination of glucosamine 6-phosphate (GlcN6P) to form fructose 6-phosphate (Fru6P) and ammonium ion.</text>
</comment>
<comment type="catalytic activity">
    <reaction evidence="1">
        <text>alpha-D-glucosamine 6-phosphate + H2O = beta-D-fructose 6-phosphate + NH4(+)</text>
        <dbReference type="Rhea" id="RHEA:12172"/>
        <dbReference type="ChEBI" id="CHEBI:15377"/>
        <dbReference type="ChEBI" id="CHEBI:28938"/>
        <dbReference type="ChEBI" id="CHEBI:57634"/>
        <dbReference type="ChEBI" id="CHEBI:75989"/>
        <dbReference type="EC" id="3.5.99.6"/>
    </reaction>
</comment>
<comment type="pathway">
    <text evidence="1">Amino-sugar metabolism; N-acetylneuraminate degradation; D-fructose 6-phosphate from N-acetylneuraminate: step 5/5.</text>
</comment>
<comment type="similarity">
    <text evidence="1">Belongs to the glucosamine/galactosamine-6-phosphate isomerase family. NagB subfamily.</text>
</comment>
<feature type="chain" id="PRO_1000066990" description="Glucosamine-6-phosphate deaminase">
    <location>
        <begin position="1"/>
        <end position="239"/>
    </location>
</feature>
<feature type="active site" description="Proton acceptor; for enolization step" evidence="1">
    <location>
        <position position="62"/>
    </location>
</feature>
<feature type="active site" description="For ring-opening step" evidence="1">
    <location>
        <position position="128"/>
    </location>
</feature>
<feature type="active site" description="Proton acceptor; for ring-opening step" evidence="1">
    <location>
        <position position="130"/>
    </location>
</feature>
<feature type="active site" description="For ring-opening step" evidence="1">
    <location>
        <position position="135"/>
    </location>
</feature>
<gene>
    <name evidence="1" type="primary">nagB</name>
    <name type="ordered locus">LBA1948</name>
</gene>
<name>NAGB_LACAC</name>
<evidence type="ECO:0000255" key="1">
    <source>
        <dbReference type="HAMAP-Rule" id="MF_01241"/>
    </source>
</evidence>
<dbReference type="EC" id="3.5.99.6" evidence="1"/>
<dbReference type="EMBL" id="CP000033">
    <property type="protein sequence ID" value="AAV43743.1"/>
    <property type="molecule type" value="Genomic_DNA"/>
</dbReference>
<dbReference type="RefSeq" id="WP_003549469.1">
    <property type="nucleotide sequence ID" value="NC_006814.3"/>
</dbReference>
<dbReference type="RefSeq" id="YP_194774.1">
    <property type="nucleotide sequence ID" value="NC_006814.3"/>
</dbReference>
<dbReference type="SMR" id="Q5FHT1"/>
<dbReference type="STRING" id="272621.LBA1948"/>
<dbReference type="GeneID" id="93290917"/>
<dbReference type="KEGG" id="lac:LBA1948"/>
<dbReference type="PATRIC" id="fig|272621.13.peg.1852"/>
<dbReference type="eggNOG" id="COG0363">
    <property type="taxonomic scope" value="Bacteria"/>
</dbReference>
<dbReference type="HOGENOM" id="CLU_049611_1_0_9"/>
<dbReference type="OrthoDB" id="9791139at2"/>
<dbReference type="BioCyc" id="LACI272621:G1G49-1899-MONOMER"/>
<dbReference type="UniPathway" id="UPA00629">
    <property type="reaction ID" value="UER00684"/>
</dbReference>
<dbReference type="Proteomes" id="UP000006381">
    <property type="component" value="Chromosome"/>
</dbReference>
<dbReference type="GO" id="GO:0005737">
    <property type="term" value="C:cytoplasm"/>
    <property type="evidence" value="ECO:0007669"/>
    <property type="project" value="TreeGrafter"/>
</dbReference>
<dbReference type="GO" id="GO:0004342">
    <property type="term" value="F:glucosamine-6-phosphate deaminase activity"/>
    <property type="evidence" value="ECO:0007669"/>
    <property type="project" value="UniProtKB-UniRule"/>
</dbReference>
<dbReference type="GO" id="GO:0042802">
    <property type="term" value="F:identical protein binding"/>
    <property type="evidence" value="ECO:0007669"/>
    <property type="project" value="TreeGrafter"/>
</dbReference>
<dbReference type="GO" id="GO:0005975">
    <property type="term" value="P:carbohydrate metabolic process"/>
    <property type="evidence" value="ECO:0007669"/>
    <property type="project" value="InterPro"/>
</dbReference>
<dbReference type="GO" id="GO:0006043">
    <property type="term" value="P:glucosamine catabolic process"/>
    <property type="evidence" value="ECO:0007669"/>
    <property type="project" value="TreeGrafter"/>
</dbReference>
<dbReference type="GO" id="GO:0006046">
    <property type="term" value="P:N-acetylglucosamine catabolic process"/>
    <property type="evidence" value="ECO:0007669"/>
    <property type="project" value="TreeGrafter"/>
</dbReference>
<dbReference type="GO" id="GO:0019262">
    <property type="term" value="P:N-acetylneuraminate catabolic process"/>
    <property type="evidence" value="ECO:0007669"/>
    <property type="project" value="UniProtKB-UniRule"/>
</dbReference>
<dbReference type="CDD" id="cd01399">
    <property type="entry name" value="GlcN6P_deaminase"/>
    <property type="match status" value="1"/>
</dbReference>
<dbReference type="FunFam" id="3.40.50.1360:FF:000003">
    <property type="entry name" value="Glucosamine-6-phosphate deaminase"/>
    <property type="match status" value="1"/>
</dbReference>
<dbReference type="Gene3D" id="3.40.50.1360">
    <property type="match status" value="1"/>
</dbReference>
<dbReference type="HAMAP" id="MF_01241">
    <property type="entry name" value="GlcN6P_deamin"/>
    <property type="match status" value="1"/>
</dbReference>
<dbReference type="InterPro" id="IPR006148">
    <property type="entry name" value="Glc/Gal-6P_isomerase"/>
</dbReference>
<dbReference type="InterPro" id="IPR004547">
    <property type="entry name" value="Glucosamine6P_isomerase"/>
</dbReference>
<dbReference type="InterPro" id="IPR018321">
    <property type="entry name" value="Glucosamine6P_isomerase_CS"/>
</dbReference>
<dbReference type="InterPro" id="IPR037171">
    <property type="entry name" value="NagB/RpiA_transferase-like"/>
</dbReference>
<dbReference type="NCBIfam" id="TIGR00502">
    <property type="entry name" value="nagB"/>
    <property type="match status" value="1"/>
</dbReference>
<dbReference type="PANTHER" id="PTHR11280">
    <property type="entry name" value="GLUCOSAMINE-6-PHOSPHATE ISOMERASE"/>
    <property type="match status" value="1"/>
</dbReference>
<dbReference type="PANTHER" id="PTHR11280:SF5">
    <property type="entry name" value="GLUCOSAMINE-6-PHOSPHATE ISOMERASE"/>
    <property type="match status" value="1"/>
</dbReference>
<dbReference type="Pfam" id="PF01182">
    <property type="entry name" value="Glucosamine_iso"/>
    <property type="match status" value="1"/>
</dbReference>
<dbReference type="SUPFAM" id="SSF100950">
    <property type="entry name" value="NagB/RpiA/CoA transferase-like"/>
    <property type="match status" value="1"/>
</dbReference>
<dbReference type="PROSITE" id="PS01161">
    <property type="entry name" value="GLC_GALNAC_ISOMERASE"/>
    <property type="match status" value="1"/>
</dbReference>